<dbReference type="EMBL" id="CP000970">
    <property type="protein sequence ID" value="ACB19620.1"/>
    <property type="molecule type" value="Genomic_DNA"/>
</dbReference>
<dbReference type="RefSeq" id="WP_001207201.1">
    <property type="nucleotide sequence ID" value="NC_010498.1"/>
</dbReference>
<dbReference type="SMR" id="B1LNT7"/>
<dbReference type="GeneID" id="93777909"/>
<dbReference type="KEGG" id="ecm:EcSMS35_4433"/>
<dbReference type="HOGENOM" id="CLU_092227_0_2_6"/>
<dbReference type="Proteomes" id="UP000007011">
    <property type="component" value="Chromosome"/>
</dbReference>
<dbReference type="GO" id="GO:0015934">
    <property type="term" value="C:large ribosomal subunit"/>
    <property type="evidence" value="ECO:0007669"/>
    <property type="project" value="InterPro"/>
</dbReference>
<dbReference type="GO" id="GO:0070180">
    <property type="term" value="F:large ribosomal subunit rRNA binding"/>
    <property type="evidence" value="ECO:0007669"/>
    <property type="project" value="UniProtKB-UniRule"/>
</dbReference>
<dbReference type="GO" id="GO:0003735">
    <property type="term" value="F:structural constituent of ribosome"/>
    <property type="evidence" value="ECO:0007669"/>
    <property type="project" value="InterPro"/>
</dbReference>
<dbReference type="GO" id="GO:0006412">
    <property type="term" value="P:translation"/>
    <property type="evidence" value="ECO:0007669"/>
    <property type="project" value="UniProtKB-UniRule"/>
</dbReference>
<dbReference type="CDD" id="cd05797">
    <property type="entry name" value="Ribosomal_L10"/>
    <property type="match status" value="1"/>
</dbReference>
<dbReference type="FunFam" id="3.30.70.1730:FF:000001">
    <property type="entry name" value="50S ribosomal protein L10"/>
    <property type="match status" value="1"/>
</dbReference>
<dbReference type="Gene3D" id="3.30.70.1730">
    <property type="match status" value="1"/>
</dbReference>
<dbReference type="Gene3D" id="6.10.250.2350">
    <property type="match status" value="1"/>
</dbReference>
<dbReference type="HAMAP" id="MF_00362">
    <property type="entry name" value="Ribosomal_uL10"/>
    <property type="match status" value="1"/>
</dbReference>
<dbReference type="InterPro" id="IPR001790">
    <property type="entry name" value="Ribosomal_uL10"/>
</dbReference>
<dbReference type="InterPro" id="IPR043141">
    <property type="entry name" value="Ribosomal_uL10-like_sf"/>
</dbReference>
<dbReference type="InterPro" id="IPR022973">
    <property type="entry name" value="Ribosomal_uL10_bac"/>
</dbReference>
<dbReference type="InterPro" id="IPR047865">
    <property type="entry name" value="Ribosomal_uL10_bac_type"/>
</dbReference>
<dbReference type="InterPro" id="IPR002363">
    <property type="entry name" value="Ribosomal_uL10_CS_bac"/>
</dbReference>
<dbReference type="NCBIfam" id="NF000955">
    <property type="entry name" value="PRK00099.1-1"/>
    <property type="match status" value="1"/>
</dbReference>
<dbReference type="PANTHER" id="PTHR11560">
    <property type="entry name" value="39S RIBOSOMAL PROTEIN L10, MITOCHONDRIAL"/>
    <property type="match status" value="1"/>
</dbReference>
<dbReference type="Pfam" id="PF00466">
    <property type="entry name" value="Ribosomal_L10"/>
    <property type="match status" value="1"/>
</dbReference>
<dbReference type="SUPFAM" id="SSF160369">
    <property type="entry name" value="Ribosomal protein L10-like"/>
    <property type="match status" value="1"/>
</dbReference>
<dbReference type="PROSITE" id="PS01109">
    <property type="entry name" value="RIBOSOMAL_L10"/>
    <property type="match status" value="1"/>
</dbReference>
<name>RL10_ECOSM</name>
<protein>
    <recommendedName>
        <fullName evidence="1">Large ribosomal subunit protein uL10</fullName>
    </recommendedName>
    <alternativeName>
        <fullName evidence="2">50S ribosomal protein L10</fullName>
    </alternativeName>
</protein>
<feature type="chain" id="PRO_1000120959" description="Large ribosomal subunit protein uL10">
    <location>
        <begin position="1"/>
        <end position="165"/>
    </location>
</feature>
<feature type="modified residue" description="N6-acetyllysine" evidence="1">
    <location>
        <position position="37"/>
    </location>
</feature>
<feature type="modified residue" description="N6-acetyllysine" evidence="1">
    <location>
        <position position="105"/>
    </location>
</feature>
<evidence type="ECO:0000255" key="1">
    <source>
        <dbReference type="HAMAP-Rule" id="MF_00362"/>
    </source>
</evidence>
<evidence type="ECO:0000305" key="2"/>
<proteinExistence type="inferred from homology"/>
<accession>B1LNT7</accession>
<comment type="function">
    <text evidence="1">Forms part of the ribosomal stalk, playing a central role in the interaction of the ribosome with GTP-bound translation factors.</text>
</comment>
<comment type="subunit">
    <text evidence="1">Part of the ribosomal stalk of the 50S ribosomal subunit. The N-terminus interacts with L11 and the large rRNA to form the base of the stalk. The C-terminus forms an elongated spine to which L12 dimers bind in a sequential fashion forming a multimeric L10(L12)X complex.</text>
</comment>
<comment type="similarity">
    <text evidence="1">Belongs to the universal ribosomal protein uL10 family.</text>
</comment>
<gene>
    <name evidence="1" type="primary">rplJ</name>
    <name type="ordered locus">EcSMS35_4433</name>
</gene>
<organism>
    <name type="scientific">Escherichia coli (strain SMS-3-5 / SECEC)</name>
    <dbReference type="NCBI Taxonomy" id="439855"/>
    <lineage>
        <taxon>Bacteria</taxon>
        <taxon>Pseudomonadati</taxon>
        <taxon>Pseudomonadota</taxon>
        <taxon>Gammaproteobacteria</taxon>
        <taxon>Enterobacterales</taxon>
        <taxon>Enterobacteriaceae</taxon>
        <taxon>Escherichia</taxon>
    </lineage>
</organism>
<reference key="1">
    <citation type="journal article" date="2008" name="J. Bacteriol.">
        <title>Insights into the environmental resistance gene pool from the genome sequence of the multidrug-resistant environmental isolate Escherichia coli SMS-3-5.</title>
        <authorList>
            <person name="Fricke W.F."/>
            <person name="Wright M.S."/>
            <person name="Lindell A.H."/>
            <person name="Harkins D.M."/>
            <person name="Baker-Austin C."/>
            <person name="Ravel J."/>
            <person name="Stepanauskas R."/>
        </authorList>
    </citation>
    <scope>NUCLEOTIDE SEQUENCE [LARGE SCALE GENOMIC DNA]</scope>
    <source>
        <strain>SMS-3-5 / SECEC</strain>
    </source>
</reference>
<keyword id="KW-0007">Acetylation</keyword>
<keyword id="KW-0687">Ribonucleoprotein</keyword>
<keyword id="KW-0689">Ribosomal protein</keyword>
<keyword id="KW-0694">RNA-binding</keyword>
<keyword id="KW-0699">rRNA-binding</keyword>
<sequence>MALNLQDKQAIVAEVSEVAKGALSAVVADSRGVTVDKMTELRKAGREAGVYMRVVRNTLLRRAVEGTPFECLKDAFVGPTLIAYSMEHPGAAARLFKEFAKANAKFEVKAAAFEGELIPASQIDRLATLPTYEEAIARLMATMKEASAGKLVRTLAAVRDAKEAA</sequence>